<sequence>MNLIQTLEKEQFDKLSAGRVIPEFGPGDTVIVNVKVVEGERSRVQAYEGVCIGRSGGGINESFTVRKISYGEGVERVFPLLSPMIDSIKVVRRGKVRRAKLYYLRNLRGKSARITEKKQDRPAKVVAGAAE</sequence>
<keyword id="KW-0687">Ribonucleoprotein</keyword>
<keyword id="KW-0689">Ribosomal protein</keyword>
<name>RL19_RHOP5</name>
<reference key="1">
    <citation type="submission" date="2006-09" db="EMBL/GenBank/DDBJ databases">
        <title>Complete sequence of Rhodopseudomonas palustris BisA53.</title>
        <authorList>
            <consortium name="US DOE Joint Genome Institute"/>
            <person name="Copeland A."/>
            <person name="Lucas S."/>
            <person name="Lapidus A."/>
            <person name="Barry K."/>
            <person name="Detter J.C."/>
            <person name="Glavina del Rio T."/>
            <person name="Hammon N."/>
            <person name="Israni S."/>
            <person name="Dalin E."/>
            <person name="Tice H."/>
            <person name="Pitluck S."/>
            <person name="Chain P."/>
            <person name="Malfatti S."/>
            <person name="Shin M."/>
            <person name="Vergez L."/>
            <person name="Schmutz J."/>
            <person name="Larimer F."/>
            <person name="Land M."/>
            <person name="Hauser L."/>
            <person name="Pelletier D.A."/>
            <person name="Kyrpides N."/>
            <person name="Kim E."/>
            <person name="Harwood C.S."/>
            <person name="Oda Y."/>
            <person name="Richardson P."/>
        </authorList>
    </citation>
    <scope>NUCLEOTIDE SEQUENCE [LARGE SCALE GENOMIC DNA]</scope>
    <source>
        <strain>BisA53</strain>
    </source>
</reference>
<protein>
    <recommendedName>
        <fullName evidence="1">Large ribosomal subunit protein bL19</fullName>
    </recommendedName>
    <alternativeName>
        <fullName evidence="2">50S ribosomal protein L19</fullName>
    </alternativeName>
</protein>
<proteinExistence type="inferred from homology"/>
<evidence type="ECO:0000255" key="1">
    <source>
        <dbReference type="HAMAP-Rule" id="MF_00402"/>
    </source>
</evidence>
<evidence type="ECO:0000305" key="2"/>
<comment type="function">
    <text evidence="1">This protein is located at the 30S-50S ribosomal subunit interface and may play a role in the structure and function of the aminoacyl-tRNA binding site.</text>
</comment>
<comment type="similarity">
    <text evidence="1">Belongs to the bacterial ribosomal protein bL19 family.</text>
</comment>
<dbReference type="EMBL" id="CP000463">
    <property type="protein sequence ID" value="ABJ04290.1"/>
    <property type="molecule type" value="Genomic_DNA"/>
</dbReference>
<dbReference type="SMR" id="Q07UU4"/>
<dbReference type="STRING" id="316055.RPE_0331"/>
<dbReference type="KEGG" id="rpe:RPE_0331"/>
<dbReference type="eggNOG" id="COG0335">
    <property type="taxonomic scope" value="Bacteria"/>
</dbReference>
<dbReference type="HOGENOM" id="CLU_103507_2_1_5"/>
<dbReference type="OrthoDB" id="9803541at2"/>
<dbReference type="GO" id="GO:0022625">
    <property type="term" value="C:cytosolic large ribosomal subunit"/>
    <property type="evidence" value="ECO:0007669"/>
    <property type="project" value="TreeGrafter"/>
</dbReference>
<dbReference type="GO" id="GO:0003735">
    <property type="term" value="F:structural constituent of ribosome"/>
    <property type="evidence" value="ECO:0007669"/>
    <property type="project" value="InterPro"/>
</dbReference>
<dbReference type="GO" id="GO:0006412">
    <property type="term" value="P:translation"/>
    <property type="evidence" value="ECO:0007669"/>
    <property type="project" value="UniProtKB-UniRule"/>
</dbReference>
<dbReference type="FunFam" id="2.30.30.790:FF:000001">
    <property type="entry name" value="50S ribosomal protein L19"/>
    <property type="match status" value="1"/>
</dbReference>
<dbReference type="Gene3D" id="2.30.30.790">
    <property type="match status" value="1"/>
</dbReference>
<dbReference type="HAMAP" id="MF_00402">
    <property type="entry name" value="Ribosomal_bL19"/>
    <property type="match status" value="1"/>
</dbReference>
<dbReference type="InterPro" id="IPR001857">
    <property type="entry name" value="Ribosomal_bL19"/>
</dbReference>
<dbReference type="InterPro" id="IPR018257">
    <property type="entry name" value="Ribosomal_bL19_CS"/>
</dbReference>
<dbReference type="InterPro" id="IPR038657">
    <property type="entry name" value="Ribosomal_bL19_sf"/>
</dbReference>
<dbReference type="InterPro" id="IPR008991">
    <property type="entry name" value="Translation_prot_SH3-like_sf"/>
</dbReference>
<dbReference type="NCBIfam" id="TIGR01024">
    <property type="entry name" value="rplS_bact"/>
    <property type="match status" value="1"/>
</dbReference>
<dbReference type="PANTHER" id="PTHR15680:SF9">
    <property type="entry name" value="LARGE RIBOSOMAL SUBUNIT PROTEIN BL19M"/>
    <property type="match status" value="1"/>
</dbReference>
<dbReference type="PANTHER" id="PTHR15680">
    <property type="entry name" value="RIBOSOMAL PROTEIN L19"/>
    <property type="match status" value="1"/>
</dbReference>
<dbReference type="Pfam" id="PF01245">
    <property type="entry name" value="Ribosomal_L19"/>
    <property type="match status" value="1"/>
</dbReference>
<dbReference type="PIRSF" id="PIRSF002191">
    <property type="entry name" value="Ribosomal_L19"/>
    <property type="match status" value="1"/>
</dbReference>
<dbReference type="PRINTS" id="PR00061">
    <property type="entry name" value="RIBOSOMALL19"/>
</dbReference>
<dbReference type="SUPFAM" id="SSF50104">
    <property type="entry name" value="Translation proteins SH3-like domain"/>
    <property type="match status" value="1"/>
</dbReference>
<dbReference type="PROSITE" id="PS01015">
    <property type="entry name" value="RIBOSOMAL_L19"/>
    <property type="match status" value="1"/>
</dbReference>
<gene>
    <name evidence="1" type="primary">rplS</name>
    <name type="ordered locus">RPE_0331</name>
</gene>
<organism>
    <name type="scientific">Rhodopseudomonas palustris (strain BisA53)</name>
    <dbReference type="NCBI Taxonomy" id="316055"/>
    <lineage>
        <taxon>Bacteria</taxon>
        <taxon>Pseudomonadati</taxon>
        <taxon>Pseudomonadota</taxon>
        <taxon>Alphaproteobacteria</taxon>
        <taxon>Hyphomicrobiales</taxon>
        <taxon>Nitrobacteraceae</taxon>
        <taxon>Rhodopseudomonas</taxon>
    </lineage>
</organism>
<feature type="chain" id="PRO_1000049727" description="Large ribosomal subunit protein bL19">
    <location>
        <begin position="1"/>
        <end position="131"/>
    </location>
</feature>
<accession>Q07UU4</accession>